<protein>
    <recommendedName>
        <fullName evidence="1">Exodeoxyribonuclease 7 large subunit</fullName>
        <ecNumber evidence="1">3.1.11.6</ecNumber>
    </recommendedName>
    <alternativeName>
        <fullName evidence="1">Exodeoxyribonuclease VII large subunit</fullName>
        <shortName evidence="1">Exonuclease VII large subunit</shortName>
    </alternativeName>
</protein>
<name>EX7L_XYLFT</name>
<organism>
    <name type="scientific">Xylella fastidiosa (strain Temecula1 / ATCC 700964)</name>
    <dbReference type="NCBI Taxonomy" id="183190"/>
    <lineage>
        <taxon>Bacteria</taxon>
        <taxon>Pseudomonadati</taxon>
        <taxon>Pseudomonadota</taxon>
        <taxon>Gammaproteobacteria</taxon>
        <taxon>Lysobacterales</taxon>
        <taxon>Lysobacteraceae</taxon>
        <taxon>Xylella</taxon>
    </lineage>
</organism>
<accession>Q87AC5</accession>
<comment type="function">
    <text evidence="1">Bidirectionally degrades single-stranded DNA into large acid-insoluble oligonucleotides, which are then degraded further into small acid-soluble oligonucleotides.</text>
</comment>
<comment type="catalytic activity">
    <reaction evidence="1">
        <text>Exonucleolytic cleavage in either 5'- to 3'- or 3'- to 5'-direction to yield nucleoside 5'-phosphates.</text>
        <dbReference type="EC" id="3.1.11.6"/>
    </reaction>
</comment>
<comment type="subunit">
    <text evidence="1">Heterooligomer composed of large and small subunits.</text>
</comment>
<comment type="subcellular location">
    <subcellularLocation>
        <location evidence="1">Cytoplasm</location>
    </subcellularLocation>
</comment>
<comment type="similarity">
    <text evidence="1">Belongs to the XseA family.</text>
</comment>
<keyword id="KW-0963">Cytoplasm</keyword>
<keyword id="KW-0269">Exonuclease</keyword>
<keyword id="KW-0378">Hydrolase</keyword>
<keyword id="KW-0540">Nuclease</keyword>
<keyword id="KW-1185">Reference proteome</keyword>
<evidence type="ECO:0000255" key="1">
    <source>
        <dbReference type="HAMAP-Rule" id="MF_00378"/>
    </source>
</evidence>
<gene>
    <name evidence="1" type="primary">xseA</name>
    <name type="ordered locus">PD_1901</name>
</gene>
<reference key="1">
    <citation type="journal article" date="2003" name="J. Bacteriol.">
        <title>Comparative analyses of the complete genome sequences of Pierce's disease and citrus variegated chlorosis strains of Xylella fastidiosa.</title>
        <authorList>
            <person name="Van Sluys M.A."/>
            <person name="de Oliveira M.C."/>
            <person name="Monteiro-Vitorello C.B."/>
            <person name="Miyaki C.Y."/>
            <person name="Furlan L.R."/>
            <person name="Camargo L.E.A."/>
            <person name="da Silva A.C.R."/>
            <person name="Moon D.H."/>
            <person name="Takita M.A."/>
            <person name="Lemos E.G.M."/>
            <person name="Machado M.A."/>
            <person name="Ferro M.I.T."/>
            <person name="da Silva F.R."/>
            <person name="Goldman M.H.S."/>
            <person name="Goldman G.H."/>
            <person name="Lemos M.V.F."/>
            <person name="El-Dorry H."/>
            <person name="Tsai S.M."/>
            <person name="Carrer H."/>
            <person name="Carraro D.M."/>
            <person name="de Oliveira R.C."/>
            <person name="Nunes L.R."/>
            <person name="Siqueira W.J."/>
            <person name="Coutinho L.L."/>
            <person name="Kimura E.T."/>
            <person name="Ferro E.S."/>
            <person name="Harakava R."/>
            <person name="Kuramae E.E."/>
            <person name="Marino C.L."/>
            <person name="Giglioti E."/>
            <person name="Abreu I.L."/>
            <person name="Alves L.M.C."/>
            <person name="do Amaral A.M."/>
            <person name="Baia G.S."/>
            <person name="Blanco S.R."/>
            <person name="Brito M.S."/>
            <person name="Cannavan F.S."/>
            <person name="Celestino A.V."/>
            <person name="da Cunha A.F."/>
            <person name="Fenille R.C."/>
            <person name="Ferro J.A."/>
            <person name="Formighieri E.F."/>
            <person name="Kishi L.T."/>
            <person name="Leoni S.G."/>
            <person name="Oliveira A.R."/>
            <person name="Rosa V.E. Jr."/>
            <person name="Sassaki F.T."/>
            <person name="Sena J.A.D."/>
            <person name="de Souza A.A."/>
            <person name="Truffi D."/>
            <person name="Tsukumo F."/>
            <person name="Yanai G.M."/>
            <person name="Zaros L.G."/>
            <person name="Civerolo E.L."/>
            <person name="Simpson A.J.G."/>
            <person name="Almeida N.F. Jr."/>
            <person name="Setubal J.C."/>
            <person name="Kitajima J.P."/>
        </authorList>
    </citation>
    <scope>NUCLEOTIDE SEQUENCE [LARGE SCALE GENOMIC DNA]</scope>
    <source>
        <strain>Temecula1 / ATCC 700964</strain>
    </source>
</reference>
<sequence length="444" mass="49782">MQHRDEILTPSQLNTLARDLLESAFPLVWIEGELGNVSRPSSGHLYVTLKDAQAQVRCAMFKPKSQWLTFQPREGLRVLARGRLTLYEARGDYQIVLDHLEESGEGALRRAFEQLRIRLEAEGLFDPARKQPLPVHPRRIAVITSPSGAVIRDILSVLMRRFPLVEIELLPSLVQGDTAAAQITHLLGGADSSGRYDAILIARGGGSLEDLWAFNNEQLARTIAAAHTPVISAIGHETDFTLADFAADIRAPTPSVAAELLVPDQRALRQHLGQLQQRLLHLQQHRLDQAIQRADQLGLRLQARNPEMHLRLLAQRQAEAGRRLQQCLHHVLDRAQGQLRNHHTRLYALNPRQQIAGLQKHLKHLNPQQPLQRRLQQEQLRLHGLVRALEAVNPLATVARGYALVRRADNNTLVRDSAQVCVGDVLDTKLAHGQLRVRVEISST</sequence>
<proteinExistence type="inferred from homology"/>
<feature type="chain" id="PRO_0000197906" description="Exodeoxyribonuclease 7 large subunit">
    <location>
        <begin position="1"/>
        <end position="444"/>
    </location>
</feature>
<dbReference type="EC" id="3.1.11.6" evidence="1"/>
<dbReference type="EMBL" id="AE009442">
    <property type="protein sequence ID" value="AAO29732.1"/>
    <property type="molecule type" value="Genomic_DNA"/>
</dbReference>
<dbReference type="RefSeq" id="WP_004090422.1">
    <property type="nucleotide sequence ID" value="NC_004556.1"/>
</dbReference>
<dbReference type="SMR" id="Q87AC5"/>
<dbReference type="GeneID" id="93905761"/>
<dbReference type="KEGG" id="xft:PD_1901"/>
<dbReference type="HOGENOM" id="CLU_023625_3_1_6"/>
<dbReference type="Proteomes" id="UP000002516">
    <property type="component" value="Chromosome"/>
</dbReference>
<dbReference type="GO" id="GO:0005737">
    <property type="term" value="C:cytoplasm"/>
    <property type="evidence" value="ECO:0007669"/>
    <property type="project" value="UniProtKB-SubCell"/>
</dbReference>
<dbReference type="GO" id="GO:0009318">
    <property type="term" value="C:exodeoxyribonuclease VII complex"/>
    <property type="evidence" value="ECO:0007669"/>
    <property type="project" value="InterPro"/>
</dbReference>
<dbReference type="GO" id="GO:0008855">
    <property type="term" value="F:exodeoxyribonuclease VII activity"/>
    <property type="evidence" value="ECO:0007669"/>
    <property type="project" value="UniProtKB-UniRule"/>
</dbReference>
<dbReference type="GO" id="GO:0003676">
    <property type="term" value="F:nucleic acid binding"/>
    <property type="evidence" value="ECO:0007669"/>
    <property type="project" value="InterPro"/>
</dbReference>
<dbReference type="GO" id="GO:0006308">
    <property type="term" value="P:DNA catabolic process"/>
    <property type="evidence" value="ECO:0007669"/>
    <property type="project" value="UniProtKB-UniRule"/>
</dbReference>
<dbReference type="CDD" id="cd04489">
    <property type="entry name" value="ExoVII_LU_OBF"/>
    <property type="match status" value="1"/>
</dbReference>
<dbReference type="HAMAP" id="MF_00378">
    <property type="entry name" value="Exonuc_7_L"/>
    <property type="match status" value="1"/>
</dbReference>
<dbReference type="InterPro" id="IPR003753">
    <property type="entry name" value="Exonuc_VII_L"/>
</dbReference>
<dbReference type="InterPro" id="IPR020579">
    <property type="entry name" value="Exonuc_VII_lsu_C"/>
</dbReference>
<dbReference type="InterPro" id="IPR025824">
    <property type="entry name" value="OB-fold_nuc-bd_dom"/>
</dbReference>
<dbReference type="NCBIfam" id="TIGR00237">
    <property type="entry name" value="xseA"/>
    <property type="match status" value="1"/>
</dbReference>
<dbReference type="PANTHER" id="PTHR30008">
    <property type="entry name" value="EXODEOXYRIBONUCLEASE 7 LARGE SUBUNIT"/>
    <property type="match status" value="1"/>
</dbReference>
<dbReference type="PANTHER" id="PTHR30008:SF0">
    <property type="entry name" value="EXODEOXYRIBONUCLEASE 7 LARGE SUBUNIT"/>
    <property type="match status" value="1"/>
</dbReference>
<dbReference type="Pfam" id="PF02601">
    <property type="entry name" value="Exonuc_VII_L"/>
    <property type="match status" value="1"/>
</dbReference>
<dbReference type="Pfam" id="PF13742">
    <property type="entry name" value="tRNA_anti_2"/>
    <property type="match status" value="1"/>
</dbReference>